<proteinExistence type="inferred from homology"/>
<accession>B1N0C1</accession>
<evidence type="ECO:0000255" key="1">
    <source>
        <dbReference type="HAMAP-Rule" id="MF_00226"/>
    </source>
</evidence>
<dbReference type="EMBL" id="DQ489736">
    <property type="protein sequence ID" value="ACA83223.1"/>
    <property type="molecule type" value="Genomic_DNA"/>
</dbReference>
<dbReference type="RefSeq" id="WP_004906666.1">
    <property type="nucleotide sequence ID" value="NC_010471.1"/>
</dbReference>
<dbReference type="SMR" id="B1N0C1"/>
<dbReference type="STRING" id="349519.LCK_01399"/>
<dbReference type="KEGG" id="lci:LCK_01399"/>
<dbReference type="eggNOG" id="COG1058">
    <property type="taxonomic scope" value="Bacteria"/>
</dbReference>
<dbReference type="eggNOG" id="COG1546">
    <property type="taxonomic scope" value="Bacteria"/>
</dbReference>
<dbReference type="HOGENOM" id="CLU_030805_9_3_9"/>
<dbReference type="OrthoDB" id="9801454at2"/>
<dbReference type="Proteomes" id="UP000002166">
    <property type="component" value="Chromosome"/>
</dbReference>
<dbReference type="CDD" id="cd00885">
    <property type="entry name" value="cinA"/>
    <property type="match status" value="1"/>
</dbReference>
<dbReference type="Gene3D" id="3.30.70.2860">
    <property type="match status" value="1"/>
</dbReference>
<dbReference type="Gene3D" id="3.90.950.20">
    <property type="entry name" value="CinA-like"/>
    <property type="match status" value="1"/>
</dbReference>
<dbReference type="Gene3D" id="3.40.980.10">
    <property type="entry name" value="MoaB/Mog-like domain"/>
    <property type="match status" value="1"/>
</dbReference>
<dbReference type="HAMAP" id="MF_00226_B">
    <property type="entry name" value="CinA_B"/>
    <property type="match status" value="1"/>
</dbReference>
<dbReference type="InterPro" id="IPR050101">
    <property type="entry name" value="CinA"/>
</dbReference>
<dbReference type="InterPro" id="IPR036653">
    <property type="entry name" value="CinA-like_C"/>
</dbReference>
<dbReference type="InterPro" id="IPR008136">
    <property type="entry name" value="CinA_C"/>
</dbReference>
<dbReference type="InterPro" id="IPR041424">
    <property type="entry name" value="CinA_KH"/>
</dbReference>
<dbReference type="InterPro" id="IPR008135">
    <property type="entry name" value="Competence-induced_CinA"/>
</dbReference>
<dbReference type="InterPro" id="IPR036425">
    <property type="entry name" value="MoaB/Mog-like_dom_sf"/>
</dbReference>
<dbReference type="InterPro" id="IPR001453">
    <property type="entry name" value="MoaB/Mog_dom"/>
</dbReference>
<dbReference type="NCBIfam" id="TIGR00200">
    <property type="entry name" value="cinA_nterm"/>
    <property type="match status" value="1"/>
</dbReference>
<dbReference type="PANTHER" id="PTHR13939">
    <property type="entry name" value="NICOTINAMIDE-NUCLEOTIDE AMIDOHYDROLASE PNCC"/>
    <property type="match status" value="1"/>
</dbReference>
<dbReference type="PANTHER" id="PTHR13939:SF0">
    <property type="entry name" value="NMN AMIDOHYDROLASE-LIKE PROTEIN YFAY"/>
    <property type="match status" value="1"/>
</dbReference>
<dbReference type="Pfam" id="PF02464">
    <property type="entry name" value="CinA"/>
    <property type="match status" value="1"/>
</dbReference>
<dbReference type="Pfam" id="PF18146">
    <property type="entry name" value="CinA_KH"/>
    <property type="match status" value="1"/>
</dbReference>
<dbReference type="Pfam" id="PF00994">
    <property type="entry name" value="MoCF_biosynth"/>
    <property type="match status" value="1"/>
</dbReference>
<dbReference type="PIRSF" id="PIRSF006728">
    <property type="entry name" value="CinA"/>
    <property type="match status" value="1"/>
</dbReference>
<dbReference type="SMART" id="SM00852">
    <property type="entry name" value="MoCF_biosynth"/>
    <property type="match status" value="1"/>
</dbReference>
<dbReference type="SUPFAM" id="SSF142433">
    <property type="entry name" value="CinA-like"/>
    <property type="match status" value="1"/>
</dbReference>
<dbReference type="SUPFAM" id="SSF53218">
    <property type="entry name" value="Molybdenum cofactor biosynthesis proteins"/>
    <property type="match status" value="1"/>
</dbReference>
<name>CINA_LEUCK</name>
<keyword id="KW-1185">Reference proteome</keyword>
<protein>
    <recommendedName>
        <fullName evidence="1">Putative competence-damage inducible protein</fullName>
    </recommendedName>
</protein>
<comment type="similarity">
    <text evidence="1">Belongs to the CinA family.</text>
</comment>
<sequence>MKAEIISVGTELLLGQITDTNRPYIARALHDMGIESYHQSIVGGNAADILTTLRLAAHRSDLIILIGGLGPAVDDLTKQVVSQFINSSLIPDTEALRKLKKWHDAVDVEMADNNYRQVLFLEQGKPLKNDFGFAVGSFYQSNDGPDFLLMPGPPWEMVPMFDHYVVPLLERQYLHGQVLNSLVMRYFGIGESRLSQLISDLMISQTNPTMTTDAKKHEVTIRLTSKASSEALAENLNQKAAAKINTLVGDYFYGYGAHNSLEKVVANLLEENQQTIAMTEVFTRGLVQSTLQNALSQTETLAGGFNGMSALLDLTDDEIELSGDNGAQLVSRLAQLTQQRLGADIGLAILAETPESNGQHDYVNEKVWFGLVSHQERLLVTSQSFAKDHQDNVEDAIFVALDLIRRHLSQQNLVDRA</sequence>
<gene>
    <name evidence="1" type="primary">cinA</name>
    <name type="ordered locus">LCK_01399</name>
</gene>
<reference key="1">
    <citation type="journal article" date="2008" name="J. Bacteriol.">
        <title>Complete genome sequence of Leuconostoc citreum KM20.</title>
        <authorList>
            <person name="Kim J.F."/>
            <person name="Jeong H."/>
            <person name="Lee J.-S."/>
            <person name="Choi S.-H."/>
            <person name="Ha M."/>
            <person name="Hur C.-G."/>
            <person name="Kim J.-S."/>
            <person name="Lee S."/>
            <person name="Park H.-S."/>
            <person name="Park Y.-H."/>
            <person name="Oh T.K."/>
        </authorList>
    </citation>
    <scope>NUCLEOTIDE SEQUENCE [LARGE SCALE GENOMIC DNA]</scope>
    <source>
        <strain>KM20</strain>
    </source>
</reference>
<feature type="chain" id="PRO_1000100327" description="Putative competence-damage inducible protein">
    <location>
        <begin position="1"/>
        <end position="417"/>
    </location>
</feature>
<organism>
    <name type="scientific">Leuconostoc citreum (strain KM20)</name>
    <dbReference type="NCBI Taxonomy" id="349519"/>
    <lineage>
        <taxon>Bacteria</taxon>
        <taxon>Bacillati</taxon>
        <taxon>Bacillota</taxon>
        <taxon>Bacilli</taxon>
        <taxon>Lactobacillales</taxon>
        <taxon>Lactobacillaceae</taxon>
        <taxon>Leuconostoc</taxon>
    </lineage>
</organism>